<organism>
    <name type="scientific">Yersinia pseudotuberculosis serotype IB (strain PB1/+)</name>
    <dbReference type="NCBI Taxonomy" id="502801"/>
    <lineage>
        <taxon>Bacteria</taxon>
        <taxon>Pseudomonadati</taxon>
        <taxon>Pseudomonadota</taxon>
        <taxon>Gammaproteobacteria</taxon>
        <taxon>Enterobacterales</taxon>
        <taxon>Yersiniaceae</taxon>
        <taxon>Yersinia</taxon>
    </lineage>
</organism>
<evidence type="ECO:0000255" key="1">
    <source>
        <dbReference type="HAMAP-Rule" id="MF_01380"/>
    </source>
</evidence>
<protein>
    <recommendedName>
        <fullName evidence="1">Iron-sulfur cluster insertion protein ErpA</fullName>
    </recommendedName>
</protein>
<sequence>MSNETVLPLQFTEAAAKKVKLLISDEENPNLKLRVYITGGGCSGFQYGFTFDDQVNDGDMTIEKQGVELVVDPMSLQYLVGGAVDYTEGLEGSRFIVTNPNAKSTCGCGSSFSI</sequence>
<proteinExistence type="inferred from homology"/>
<name>ERPA_YERPB</name>
<gene>
    <name evidence="1" type="primary">erpA</name>
    <name type="ordered locus">YPTS_0777</name>
</gene>
<accession>B2K550</accession>
<reference key="1">
    <citation type="submission" date="2008-04" db="EMBL/GenBank/DDBJ databases">
        <title>Complete sequence of Yersinia pseudotuberculosis PB1/+.</title>
        <authorList>
            <person name="Copeland A."/>
            <person name="Lucas S."/>
            <person name="Lapidus A."/>
            <person name="Glavina del Rio T."/>
            <person name="Dalin E."/>
            <person name="Tice H."/>
            <person name="Bruce D."/>
            <person name="Goodwin L."/>
            <person name="Pitluck S."/>
            <person name="Munk A.C."/>
            <person name="Brettin T."/>
            <person name="Detter J.C."/>
            <person name="Han C."/>
            <person name="Tapia R."/>
            <person name="Schmutz J."/>
            <person name="Larimer F."/>
            <person name="Land M."/>
            <person name="Hauser L."/>
            <person name="Challacombe J.F."/>
            <person name="Green L."/>
            <person name="Lindler L.E."/>
            <person name="Nikolich M.P."/>
            <person name="Richardson P."/>
        </authorList>
    </citation>
    <scope>NUCLEOTIDE SEQUENCE [LARGE SCALE GENOMIC DNA]</scope>
    <source>
        <strain>PB1/+</strain>
    </source>
</reference>
<keyword id="KW-0408">Iron</keyword>
<keyword id="KW-0411">Iron-sulfur</keyword>
<keyword id="KW-0479">Metal-binding</keyword>
<comment type="function">
    <text evidence="1">Required for insertion of 4Fe-4S clusters for at least IspG.</text>
</comment>
<comment type="cofactor">
    <cofactor evidence="1">
        <name>iron-sulfur cluster</name>
        <dbReference type="ChEBI" id="CHEBI:30408"/>
    </cofactor>
    <text evidence="1">Binds 1 iron-sulfur cluster per subunit.</text>
</comment>
<comment type="subunit">
    <text evidence="1">Homodimer.</text>
</comment>
<comment type="similarity">
    <text evidence="1">Belongs to the HesB/IscA family.</text>
</comment>
<feature type="chain" id="PRO_1000144946" description="Iron-sulfur cluster insertion protein ErpA">
    <location>
        <begin position="1"/>
        <end position="114"/>
    </location>
</feature>
<feature type="binding site" evidence="1">
    <location>
        <position position="42"/>
    </location>
    <ligand>
        <name>iron-sulfur cluster</name>
        <dbReference type="ChEBI" id="CHEBI:30408"/>
    </ligand>
</feature>
<feature type="binding site" evidence="1">
    <location>
        <position position="106"/>
    </location>
    <ligand>
        <name>iron-sulfur cluster</name>
        <dbReference type="ChEBI" id="CHEBI:30408"/>
    </ligand>
</feature>
<feature type="binding site" evidence="1">
    <location>
        <position position="108"/>
    </location>
    <ligand>
        <name>iron-sulfur cluster</name>
        <dbReference type="ChEBI" id="CHEBI:30408"/>
    </ligand>
</feature>
<dbReference type="EMBL" id="CP001048">
    <property type="protein sequence ID" value="ACC87761.1"/>
    <property type="molecule type" value="Genomic_DNA"/>
</dbReference>
<dbReference type="RefSeq" id="WP_002209365.1">
    <property type="nucleotide sequence ID" value="NZ_CP009780.1"/>
</dbReference>
<dbReference type="SMR" id="B2K550"/>
<dbReference type="GeneID" id="96664241"/>
<dbReference type="KEGG" id="ypb:YPTS_0777"/>
<dbReference type="PATRIC" id="fig|502801.10.peg.108"/>
<dbReference type="GO" id="GO:0005829">
    <property type="term" value="C:cytosol"/>
    <property type="evidence" value="ECO:0007669"/>
    <property type="project" value="TreeGrafter"/>
</dbReference>
<dbReference type="GO" id="GO:0051537">
    <property type="term" value="F:2 iron, 2 sulfur cluster binding"/>
    <property type="evidence" value="ECO:0007669"/>
    <property type="project" value="TreeGrafter"/>
</dbReference>
<dbReference type="GO" id="GO:0051539">
    <property type="term" value="F:4 iron, 4 sulfur cluster binding"/>
    <property type="evidence" value="ECO:0007669"/>
    <property type="project" value="TreeGrafter"/>
</dbReference>
<dbReference type="GO" id="GO:0005506">
    <property type="term" value="F:iron ion binding"/>
    <property type="evidence" value="ECO:0007669"/>
    <property type="project" value="UniProtKB-UniRule"/>
</dbReference>
<dbReference type="GO" id="GO:0016226">
    <property type="term" value="P:iron-sulfur cluster assembly"/>
    <property type="evidence" value="ECO:0007669"/>
    <property type="project" value="UniProtKB-UniRule"/>
</dbReference>
<dbReference type="FunFam" id="2.60.300.12:FF:000002">
    <property type="entry name" value="Iron-sulfur cluster insertion protein ErpA"/>
    <property type="match status" value="1"/>
</dbReference>
<dbReference type="Gene3D" id="2.60.300.12">
    <property type="entry name" value="HesB-like domain"/>
    <property type="match status" value="1"/>
</dbReference>
<dbReference type="HAMAP" id="MF_01380">
    <property type="entry name" value="Fe_S_insert_ErpA"/>
    <property type="match status" value="1"/>
</dbReference>
<dbReference type="InterPro" id="IPR000361">
    <property type="entry name" value="FeS_biogenesis"/>
</dbReference>
<dbReference type="InterPro" id="IPR016092">
    <property type="entry name" value="FeS_cluster_insertion"/>
</dbReference>
<dbReference type="InterPro" id="IPR017870">
    <property type="entry name" value="FeS_cluster_insertion_CS"/>
</dbReference>
<dbReference type="InterPro" id="IPR023063">
    <property type="entry name" value="FeS_cluster_insertion_RrpA"/>
</dbReference>
<dbReference type="InterPro" id="IPR035903">
    <property type="entry name" value="HesB-like_dom_sf"/>
</dbReference>
<dbReference type="NCBIfam" id="TIGR00049">
    <property type="entry name" value="iron-sulfur cluster assembly accessory protein"/>
    <property type="match status" value="1"/>
</dbReference>
<dbReference type="NCBIfam" id="NF010147">
    <property type="entry name" value="PRK13623.1"/>
    <property type="match status" value="1"/>
</dbReference>
<dbReference type="PANTHER" id="PTHR43011">
    <property type="entry name" value="IRON-SULFUR CLUSTER ASSEMBLY 2 HOMOLOG, MITOCHONDRIAL"/>
    <property type="match status" value="1"/>
</dbReference>
<dbReference type="PANTHER" id="PTHR43011:SF1">
    <property type="entry name" value="IRON-SULFUR CLUSTER ASSEMBLY 2 HOMOLOG, MITOCHONDRIAL"/>
    <property type="match status" value="1"/>
</dbReference>
<dbReference type="Pfam" id="PF01521">
    <property type="entry name" value="Fe-S_biosyn"/>
    <property type="match status" value="1"/>
</dbReference>
<dbReference type="SUPFAM" id="SSF89360">
    <property type="entry name" value="HesB-like domain"/>
    <property type="match status" value="1"/>
</dbReference>
<dbReference type="PROSITE" id="PS01152">
    <property type="entry name" value="HESB"/>
    <property type="match status" value="1"/>
</dbReference>